<sequence>MAPKKTTKKGGPKKRPSAEKRILTAQKRNLINQSFKSKAKTMMKKFEAALKAGDQTSISSGLQLVYSVADKAVKRGVFKSNKAARIKARATLRANAKV</sequence>
<protein>
    <recommendedName>
        <fullName evidence="1">Small ribosomal subunit protein bS20</fullName>
    </recommendedName>
    <alternativeName>
        <fullName evidence="3">30S ribosomal protein S20</fullName>
    </alternativeName>
</protein>
<proteinExistence type="inferred from homology"/>
<gene>
    <name evidence="1" type="primary">rpsT</name>
    <name type="ordered locus">CF0009</name>
</gene>
<organism>
    <name type="scientific">Chlamydia felis (strain Fe/C-56)</name>
    <name type="common">Chlamydophila felis</name>
    <dbReference type="NCBI Taxonomy" id="264202"/>
    <lineage>
        <taxon>Bacteria</taxon>
        <taxon>Pseudomonadati</taxon>
        <taxon>Chlamydiota</taxon>
        <taxon>Chlamydiia</taxon>
        <taxon>Chlamydiales</taxon>
        <taxon>Chlamydiaceae</taxon>
        <taxon>Chlamydia/Chlamydophila group</taxon>
        <taxon>Chlamydia</taxon>
    </lineage>
</organism>
<comment type="function">
    <text evidence="1">Binds directly to 16S ribosomal RNA.</text>
</comment>
<comment type="similarity">
    <text evidence="1">Belongs to the bacterial ribosomal protein bS20 family.</text>
</comment>
<evidence type="ECO:0000255" key="1">
    <source>
        <dbReference type="HAMAP-Rule" id="MF_00500"/>
    </source>
</evidence>
<evidence type="ECO:0000256" key="2">
    <source>
        <dbReference type="SAM" id="MobiDB-lite"/>
    </source>
</evidence>
<evidence type="ECO:0000305" key="3"/>
<reference key="1">
    <citation type="journal article" date="2006" name="DNA Res.">
        <title>Genome sequence of the cat pathogen, Chlamydophila felis.</title>
        <authorList>
            <person name="Azuma Y."/>
            <person name="Hirakawa H."/>
            <person name="Yamashita A."/>
            <person name="Cai Y."/>
            <person name="Rahman M.A."/>
            <person name="Suzuki H."/>
            <person name="Mitaku S."/>
            <person name="Toh H."/>
            <person name="Goto S."/>
            <person name="Murakami T."/>
            <person name="Sugi K."/>
            <person name="Hayashi H."/>
            <person name="Fukushi H."/>
            <person name="Hattori M."/>
            <person name="Kuhara S."/>
            <person name="Shirai M."/>
        </authorList>
    </citation>
    <scope>NUCLEOTIDE SEQUENCE [LARGE SCALE GENOMIC DNA]</scope>
    <source>
        <strain>Fe/C-56</strain>
    </source>
</reference>
<accession>Q256K7</accession>
<feature type="chain" id="PRO_0000260109" description="Small ribosomal subunit protein bS20">
    <location>
        <begin position="1"/>
        <end position="98"/>
    </location>
</feature>
<feature type="region of interest" description="Disordered" evidence="2">
    <location>
        <begin position="1"/>
        <end position="21"/>
    </location>
</feature>
<feature type="compositionally biased region" description="Basic residues" evidence="2">
    <location>
        <begin position="1"/>
        <end position="15"/>
    </location>
</feature>
<dbReference type="EMBL" id="AP006861">
    <property type="protein sequence ID" value="BAE80781.1"/>
    <property type="molecule type" value="Genomic_DNA"/>
</dbReference>
<dbReference type="RefSeq" id="WP_011457566.1">
    <property type="nucleotide sequence ID" value="NC_007899.1"/>
</dbReference>
<dbReference type="SMR" id="Q256K7"/>
<dbReference type="STRING" id="264202.CF0009"/>
<dbReference type="KEGG" id="cfe:CF0009"/>
<dbReference type="eggNOG" id="COG0268">
    <property type="taxonomic scope" value="Bacteria"/>
</dbReference>
<dbReference type="HOGENOM" id="CLU_160655_2_0_0"/>
<dbReference type="OrthoDB" id="21589at2"/>
<dbReference type="Proteomes" id="UP000001260">
    <property type="component" value="Chromosome"/>
</dbReference>
<dbReference type="GO" id="GO:0005829">
    <property type="term" value="C:cytosol"/>
    <property type="evidence" value="ECO:0007669"/>
    <property type="project" value="TreeGrafter"/>
</dbReference>
<dbReference type="GO" id="GO:0015935">
    <property type="term" value="C:small ribosomal subunit"/>
    <property type="evidence" value="ECO:0007669"/>
    <property type="project" value="TreeGrafter"/>
</dbReference>
<dbReference type="GO" id="GO:0070181">
    <property type="term" value="F:small ribosomal subunit rRNA binding"/>
    <property type="evidence" value="ECO:0007669"/>
    <property type="project" value="TreeGrafter"/>
</dbReference>
<dbReference type="GO" id="GO:0003735">
    <property type="term" value="F:structural constituent of ribosome"/>
    <property type="evidence" value="ECO:0007669"/>
    <property type="project" value="InterPro"/>
</dbReference>
<dbReference type="GO" id="GO:0006412">
    <property type="term" value="P:translation"/>
    <property type="evidence" value="ECO:0007669"/>
    <property type="project" value="UniProtKB-UniRule"/>
</dbReference>
<dbReference type="Gene3D" id="1.20.58.110">
    <property type="entry name" value="Ribosomal protein S20"/>
    <property type="match status" value="1"/>
</dbReference>
<dbReference type="HAMAP" id="MF_00500">
    <property type="entry name" value="Ribosomal_bS20"/>
    <property type="match status" value="1"/>
</dbReference>
<dbReference type="InterPro" id="IPR002583">
    <property type="entry name" value="Ribosomal_bS20"/>
</dbReference>
<dbReference type="InterPro" id="IPR036510">
    <property type="entry name" value="Ribosomal_bS20_sf"/>
</dbReference>
<dbReference type="NCBIfam" id="TIGR00029">
    <property type="entry name" value="S20"/>
    <property type="match status" value="1"/>
</dbReference>
<dbReference type="PANTHER" id="PTHR33398">
    <property type="entry name" value="30S RIBOSOMAL PROTEIN S20"/>
    <property type="match status" value="1"/>
</dbReference>
<dbReference type="PANTHER" id="PTHR33398:SF1">
    <property type="entry name" value="SMALL RIBOSOMAL SUBUNIT PROTEIN BS20C"/>
    <property type="match status" value="1"/>
</dbReference>
<dbReference type="Pfam" id="PF01649">
    <property type="entry name" value="Ribosomal_S20p"/>
    <property type="match status" value="1"/>
</dbReference>
<dbReference type="SUPFAM" id="SSF46992">
    <property type="entry name" value="Ribosomal protein S20"/>
    <property type="match status" value="1"/>
</dbReference>
<name>RS20_CHLFF</name>
<keyword id="KW-0687">Ribonucleoprotein</keyword>
<keyword id="KW-0689">Ribosomal protein</keyword>
<keyword id="KW-0694">RNA-binding</keyword>
<keyword id="KW-0699">rRNA-binding</keyword>